<organism>
    <name type="scientific">Xanthomonas euvesicatoria pv. vesicatoria (strain 85-10)</name>
    <name type="common">Xanthomonas campestris pv. vesicatoria</name>
    <dbReference type="NCBI Taxonomy" id="316273"/>
    <lineage>
        <taxon>Bacteria</taxon>
        <taxon>Pseudomonadati</taxon>
        <taxon>Pseudomonadota</taxon>
        <taxon>Gammaproteobacteria</taxon>
        <taxon>Lysobacterales</taxon>
        <taxon>Lysobacteraceae</taxon>
        <taxon>Xanthomonas</taxon>
    </lineage>
</organism>
<gene>
    <name evidence="1" type="primary">tsf</name>
    <name type="ordered locus">XCV1478</name>
</gene>
<comment type="function">
    <text evidence="1">Associates with the EF-Tu.GDP complex and induces the exchange of GDP to GTP. It remains bound to the aminoacyl-tRNA.EF-Tu.GTP complex up to the GTP hydrolysis stage on the ribosome.</text>
</comment>
<comment type="subcellular location">
    <subcellularLocation>
        <location evidence="1">Cytoplasm</location>
    </subcellularLocation>
</comment>
<comment type="similarity">
    <text evidence="1">Belongs to the EF-Ts family.</text>
</comment>
<reference key="1">
    <citation type="journal article" date="2005" name="J. Bacteriol.">
        <title>Insights into genome plasticity and pathogenicity of the plant pathogenic Bacterium Xanthomonas campestris pv. vesicatoria revealed by the complete genome sequence.</title>
        <authorList>
            <person name="Thieme F."/>
            <person name="Koebnik R."/>
            <person name="Bekel T."/>
            <person name="Berger C."/>
            <person name="Boch J."/>
            <person name="Buettner D."/>
            <person name="Caldana C."/>
            <person name="Gaigalat L."/>
            <person name="Goesmann A."/>
            <person name="Kay S."/>
            <person name="Kirchner O."/>
            <person name="Lanz C."/>
            <person name="Linke B."/>
            <person name="McHardy A.C."/>
            <person name="Meyer F."/>
            <person name="Mittenhuber G."/>
            <person name="Nies D.H."/>
            <person name="Niesbach-Kloesgen U."/>
            <person name="Patschkowski T."/>
            <person name="Rueckert C."/>
            <person name="Rupp O."/>
            <person name="Schneiker S."/>
            <person name="Schuster S.C."/>
            <person name="Vorhoelter F.J."/>
            <person name="Weber E."/>
            <person name="Puehler A."/>
            <person name="Bonas U."/>
            <person name="Bartels D."/>
            <person name="Kaiser O."/>
        </authorList>
    </citation>
    <scope>NUCLEOTIDE SEQUENCE [LARGE SCALE GENOMIC DNA]</scope>
    <source>
        <strain>85-10</strain>
    </source>
</reference>
<accession>Q3BVK4</accession>
<keyword id="KW-0963">Cytoplasm</keyword>
<keyword id="KW-0251">Elongation factor</keyword>
<keyword id="KW-0648">Protein biosynthesis</keyword>
<name>EFTS_XANE5</name>
<dbReference type="EMBL" id="AM039952">
    <property type="protein sequence ID" value="CAJ23109.1"/>
    <property type="molecule type" value="Genomic_DNA"/>
</dbReference>
<dbReference type="RefSeq" id="WP_008578287.1">
    <property type="nucleotide sequence ID" value="NZ_CP017190.1"/>
</dbReference>
<dbReference type="SMR" id="Q3BVK4"/>
<dbReference type="STRING" id="456327.BJD11_15255"/>
<dbReference type="GeneID" id="97509775"/>
<dbReference type="KEGG" id="xcv:XCV1478"/>
<dbReference type="eggNOG" id="COG0264">
    <property type="taxonomic scope" value="Bacteria"/>
</dbReference>
<dbReference type="HOGENOM" id="CLU_047155_0_0_6"/>
<dbReference type="Proteomes" id="UP000007069">
    <property type="component" value="Chromosome"/>
</dbReference>
<dbReference type="GO" id="GO:0005737">
    <property type="term" value="C:cytoplasm"/>
    <property type="evidence" value="ECO:0007669"/>
    <property type="project" value="UniProtKB-SubCell"/>
</dbReference>
<dbReference type="GO" id="GO:0003746">
    <property type="term" value="F:translation elongation factor activity"/>
    <property type="evidence" value="ECO:0007669"/>
    <property type="project" value="UniProtKB-UniRule"/>
</dbReference>
<dbReference type="CDD" id="cd14275">
    <property type="entry name" value="UBA_EF-Ts"/>
    <property type="match status" value="1"/>
</dbReference>
<dbReference type="FunFam" id="1.10.286.20:FF:000001">
    <property type="entry name" value="Elongation factor Ts"/>
    <property type="match status" value="1"/>
</dbReference>
<dbReference type="FunFam" id="1.10.8.10:FF:000001">
    <property type="entry name" value="Elongation factor Ts"/>
    <property type="match status" value="1"/>
</dbReference>
<dbReference type="FunFam" id="3.30.479.20:FF:000001">
    <property type="entry name" value="Elongation factor Ts"/>
    <property type="match status" value="1"/>
</dbReference>
<dbReference type="Gene3D" id="1.10.286.20">
    <property type="match status" value="1"/>
</dbReference>
<dbReference type="Gene3D" id="1.10.8.10">
    <property type="entry name" value="DNA helicase RuvA subunit, C-terminal domain"/>
    <property type="match status" value="1"/>
</dbReference>
<dbReference type="Gene3D" id="3.30.479.20">
    <property type="entry name" value="Elongation factor Ts, dimerisation domain"/>
    <property type="match status" value="2"/>
</dbReference>
<dbReference type="HAMAP" id="MF_00050">
    <property type="entry name" value="EF_Ts"/>
    <property type="match status" value="1"/>
</dbReference>
<dbReference type="InterPro" id="IPR036402">
    <property type="entry name" value="EF-Ts_dimer_sf"/>
</dbReference>
<dbReference type="InterPro" id="IPR001816">
    <property type="entry name" value="Transl_elong_EFTs/EF1B"/>
</dbReference>
<dbReference type="InterPro" id="IPR014039">
    <property type="entry name" value="Transl_elong_EFTs/EF1B_dimer"/>
</dbReference>
<dbReference type="InterPro" id="IPR018101">
    <property type="entry name" value="Transl_elong_Ts_CS"/>
</dbReference>
<dbReference type="InterPro" id="IPR009060">
    <property type="entry name" value="UBA-like_sf"/>
</dbReference>
<dbReference type="NCBIfam" id="TIGR00116">
    <property type="entry name" value="tsf"/>
    <property type="match status" value="1"/>
</dbReference>
<dbReference type="PANTHER" id="PTHR11741">
    <property type="entry name" value="ELONGATION FACTOR TS"/>
    <property type="match status" value="1"/>
</dbReference>
<dbReference type="PANTHER" id="PTHR11741:SF0">
    <property type="entry name" value="ELONGATION FACTOR TS, MITOCHONDRIAL"/>
    <property type="match status" value="1"/>
</dbReference>
<dbReference type="Pfam" id="PF00889">
    <property type="entry name" value="EF_TS"/>
    <property type="match status" value="1"/>
</dbReference>
<dbReference type="SUPFAM" id="SSF54713">
    <property type="entry name" value="Elongation factor Ts (EF-Ts), dimerisation domain"/>
    <property type="match status" value="2"/>
</dbReference>
<dbReference type="SUPFAM" id="SSF46934">
    <property type="entry name" value="UBA-like"/>
    <property type="match status" value="1"/>
</dbReference>
<dbReference type="PROSITE" id="PS01126">
    <property type="entry name" value="EF_TS_1"/>
    <property type="match status" value="1"/>
</dbReference>
<dbReference type="PROSITE" id="PS01127">
    <property type="entry name" value="EF_TS_2"/>
    <property type="match status" value="1"/>
</dbReference>
<sequence length="292" mass="31034">MEITASLVKELRERTGAGMMECKKALVENAGDIDAAAEWLRKSGLAKADKKADRVAAEGRIATAQAGGKAVLVEVNSETDFVAKDENFLAFTEVVANAALNSDAADAEALKSVKLDSGETIEERRAAVIAKVGENLQVRRLVRIDSANNVAAYVHGGRIGVLVELKGGDIELARGIAMHIAAMNPPHVKASDVPAEFVAKEKEIELAKMSEKDKAKPAEILEKIISGKISKIVNEVTLYGQPYVLNTDQTVEQAVKAAGADVIGFQRLAVGEGIEKVVEDYAAEVMKQAGLA</sequence>
<feature type="chain" id="PRO_0000241552" description="Elongation factor Ts">
    <location>
        <begin position="1"/>
        <end position="292"/>
    </location>
</feature>
<feature type="region of interest" description="Involved in Mg(2+) ion dislocation from EF-Tu" evidence="1">
    <location>
        <begin position="79"/>
        <end position="82"/>
    </location>
</feature>
<evidence type="ECO:0000255" key="1">
    <source>
        <dbReference type="HAMAP-Rule" id="MF_00050"/>
    </source>
</evidence>
<protein>
    <recommendedName>
        <fullName evidence="1">Elongation factor Ts</fullName>
        <shortName evidence="1">EF-Ts</shortName>
    </recommendedName>
</protein>
<proteinExistence type="inferred from homology"/>